<feature type="chain" id="PRO_1000021037" description="Inner membrane-spanning protein YciB">
    <location>
        <begin position="1"/>
        <end position="220"/>
    </location>
</feature>
<feature type="transmembrane region" description="Helical" evidence="1">
    <location>
        <begin position="20"/>
        <end position="40"/>
    </location>
</feature>
<feature type="transmembrane region" description="Helical" evidence="1">
    <location>
        <begin position="57"/>
        <end position="77"/>
    </location>
</feature>
<feature type="transmembrane region" description="Helical" evidence="1">
    <location>
        <begin position="86"/>
        <end position="106"/>
    </location>
</feature>
<feature type="transmembrane region" description="Helical" evidence="1">
    <location>
        <begin position="123"/>
        <end position="143"/>
    </location>
</feature>
<feature type="transmembrane region" description="Helical" evidence="1">
    <location>
        <begin position="156"/>
        <end position="176"/>
    </location>
</feature>
<feature type="transmembrane region" description="Helical" evidence="1">
    <location>
        <begin position="187"/>
        <end position="207"/>
    </location>
</feature>
<comment type="function">
    <text evidence="1">Plays a role in cell envelope biogenesis, maintenance of cell envelope integrity and membrane homeostasis.</text>
</comment>
<comment type="subcellular location">
    <subcellularLocation>
        <location evidence="1">Cell inner membrane</location>
        <topology evidence="1">Multi-pass membrane protein</topology>
    </subcellularLocation>
</comment>
<comment type="similarity">
    <text evidence="1">Belongs to the YciB family.</text>
</comment>
<accession>A6WXE1</accession>
<sequence length="220" mass="24718">MEHPVFERDPSQKSEAERREVPPLLKLALELGPLLVFFFANARGEMLIERFPVLASIGAPIFLATALFMGATVIALAISWTMTRTLPIMPLVSGIVVLVFGALTLWLHNDTFIKMKPTIVNTLFGAILLGGLFFGKSLLGYVFDSAFRLDAEGWRKLTLRWGLFFIFLAVVNEVVWRNFSTDAWVSFKVWGIMPITIVFTLLQMPLIQKHSLTEDNKTAS</sequence>
<organism>
    <name type="scientific">Brucella anthropi (strain ATCC 49188 / DSM 6882 / CCUG 24695 / JCM 21032 / LMG 3331 / NBRC 15819 / NCTC 12168 / Alc 37)</name>
    <name type="common">Ochrobactrum anthropi</name>
    <dbReference type="NCBI Taxonomy" id="439375"/>
    <lineage>
        <taxon>Bacteria</taxon>
        <taxon>Pseudomonadati</taxon>
        <taxon>Pseudomonadota</taxon>
        <taxon>Alphaproteobacteria</taxon>
        <taxon>Hyphomicrobiales</taxon>
        <taxon>Brucellaceae</taxon>
        <taxon>Brucella/Ochrobactrum group</taxon>
        <taxon>Brucella</taxon>
    </lineage>
</organism>
<gene>
    <name evidence="1" type="primary">yciB</name>
    <name type="ordered locus">Oant_0924</name>
</gene>
<reference key="1">
    <citation type="journal article" date="2011" name="J. Bacteriol.">
        <title>Genome of Ochrobactrum anthropi ATCC 49188 T, a versatile opportunistic pathogen and symbiont of several eukaryotic hosts.</title>
        <authorList>
            <person name="Chain P.S."/>
            <person name="Lang D.M."/>
            <person name="Comerci D.J."/>
            <person name="Malfatti S.A."/>
            <person name="Vergez L.M."/>
            <person name="Shin M."/>
            <person name="Ugalde R.A."/>
            <person name="Garcia E."/>
            <person name="Tolmasky M.E."/>
        </authorList>
    </citation>
    <scope>NUCLEOTIDE SEQUENCE [LARGE SCALE GENOMIC DNA]</scope>
    <source>
        <strain>ATCC 49188 / DSM 6882 / CCUG 24695 / JCM 21032 / LMG 3331 / NBRC 15819 / NCTC 12168 / Alc 37</strain>
    </source>
</reference>
<evidence type="ECO:0000255" key="1">
    <source>
        <dbReference type="HAMAP-Rule" id="MF_00189"/>
    </source>
</evidence>
<dbReference type="EMBL" id="CP000758">
    <property type="protein sequence ID" value="ABS13645.1"/>
    <property type="molecule type" value="Genomic_DNA"/>
</dbReference>
<dbReference type="RefSeq" id="WP_012091125.1">
    <property type="nucleotide sequence ID" value="NC_009667.1"/>
</dbReference>
<dbReference type="STRING" id="439375.Oant_0924"/>
<dbReference type="KEGG" id="oan:Oant_0924"/>
<dbReference type="PATRIC" id="fig|439375.7.peg.969"/>
<dbReference type="eggNOG" id="COG2917">
    <property type="taxonomic scope" value="Bacteria"/>
</dbReference>
<dbReference type="HOGENOM" id="CLU_089554_1_1_5"/>
<dbReference type="PhylomeDB" id="A6WXE1"/>
<dbReference type="Proteomes" id="UP000002301">
    <property type="component" value="Chromosome 1"/>
</dbReference>
<dbReference type="GO" id="GO:0005886">
    <property type="term" value="C:plasma membrane"/>
    <property type="evidence" value="ECO:0007669"/>
    <property type="project" value="UniProtKB-SubCell"/>
</dbReference>
<dbReference type="HAMAP" id="MF_00189">
    <property type="entry name" value="YciB"/>
    <property type="match status" value="1"/>
</dbReference>
<dbReference type="InterPro" id="IPR006008">
    <property type="entry name" value="YciB"/>
</dbReference>
<dbReference type="NCBIfam" id="TIGR00997">
    <property type="entry name" value="ispZ"/>
    <property type="match status" value="1"/>
</dbReference>
<dbReference type="NCBIfam" id="NF001323">
    <property type="entry name" value="PRK00259.1-1"/>
    <property type="match status" value="1"/>
</dbReference>
<dbReference type="PANTHER" id="PTHR36917:SF1">
    <property type="entry name" value="INNER MEMBRANE-SPANNING PROTEIN YCIB"/>
    <property type="match status" value="1"/>
</dbReference>
<dbReference type="PANTHER" id="PTHR36917">
    <property type="entry name" value="INTRACELLULAR SEPTATION PROTEIN A-RELATED"/>
    <property type="match status" value="1"/>
</dbReference>
<dbReference type="Pfam" id="PF04279">
    <property type="entry name" value="IspA"/>
    <property type="match status" value="1"/>
</dbReference>
<name>YCIB_BRUA4</name>
<proteinExistence type="inferred from homology"/>
<protein>
    <recommendedName>
        <fullName evidence="1">Inner membrane-spanning protein YciB</fullName>
    </recommendedName>
</protein>
<keyword id="KW-0997">Cell inner membrane</keyword>
<keyword id="KW-1003">Cell membrane</keyword>
<keyword id="KW-0472">Membrane</keyword>
<keyword id="KW-1185">Reference proteome</keyword>
<keyword id="KW-0812">Transmembrane</keyword>
<keyword id="KW-1133">Transmembrane helix</keyword>